<protein>
    <recommendedName>
        <fullName evidence="1">Disulfide bond formation protein B</fullName>
    </recommendedName>
    <alternativeName>
        <fullName evidence="1">Disulfide oxidoreductase</fullName>
    </alternativeName>
</protein>
<sequence>MQSLISFAHSRLSWGILALSALALESAALYFQHIMKLDPCVMCIYQRVAVFGLLGAGLFGFMAPANRVIRALGALLWGISAAWGLKLALELVDMQNNPNPFSTCSFLPEFPSWLQLHEWLPSVFMPTGMCTDIPWEFAGVTMGEWMIVAFSVYLLAWLAFIVPMLKKSA</sequence>
<name>DSBB_SHEAM</name>
<organism>
    <name type="scientific">Shewanella amazonensis (strain ATCC BAA-1098 / SB2B)</name>
    <dbReference type="NCBI Taxonomy" id="326297"/>
    <lineage>
        <taxon>Bacteria</taxon>
        <taxon>Pseudomonadati</taxon>
        <taxon>Pseudomonadota</taxon>
        <taxon>Gammaproteobacteria</taxon>
        <taxon>Alteromonadales</taxon>
        <taxon>Shewanellaceae</taxon>
        <taxon>Shewanella</taxon>
    </lineage>
</organism>
<evidence type="ECO:0000255" key="1">
    <source>
        <dbReference type="HAMAP-Rule" id="MF_00286"/>
    </source>
</evidence>
<keyword id="KW-0997">Cell inner membrane</keyword>
<keyword id="KW-1003">Cell membrane</keyword>
<keyword id="KW-0143">Chaperone</keyword>
<keyword id="KW-1015">Disulfide bond</keyword>
<keyword id="KW-0249">Electron transport</keyword>
<keyword id="KW-0472">Membrane</keyword>
<keyword id="KW-0560">Oxidoreductase</keyword>
<keyword id="KW-0676">Redox-active center</keyword>
<keyword id="KW-1185">Reference proteome</keyword>
<keyword id="KW-0812">Transmembrane</keyword>
<keyword id="KW-1133">Transmembrane helix</keyword>
<keyword id="KW-0813">Transport</keyword>
<gene>
    <name evidence="1" type="primary">dsbB</name>
    <name type="ordered locus">Sama_1926</name>
</gene>
<reference key="1">
    <citation type="submission" date="2006-12" db="EMBL/GenBank/DDBJ databases">
        <title>Complete sequence of Shewanella amazonensis SB2B.</title>
        <authorList>
            <consortium name="US DOE Joint Genome Institute"/>
            <person name="Copeland A."/>
            <person name="Lucas S."/>
            <person name="Lapidus A."/>
            <person name="Barry K."/>
            <person name="Detter J.C."/>
            <person name="Glavina del Rio T."/>
            <person name="Hammon N."/>
            <person name="Israni S."/>
            <person name="Dalin E."/>
            <person name="Tice H."/>
            <person name="Pitluck S."/>
            <person name="Munk A.C."/>
            <person name="Brettin T."/>
            <person name="Bruce D."/>
            <person name="Han C."/>
            <person name="Tapia R."/>
            <person name="Gilna P."/>
            <person name="Schmutz J."/>
            <person name="Larimer F."/>
            <person name="Land M."/>
            <person name="Hauser L."/>
            <person name="Kyrpides N."/>
            <person name="Mikhailova N."/>
            <person name="Fredrickson J."/>
            <person name="Richardson P."/>
        </authorList>
    </citation>
    <scope>NUCLEOTIDE SEQUENCE [LARGE SCALE GENOMIC DNA]</scope>
    <source>
        <strain>ATCC BAA-1098 / SB2B</strain>
    </source>
</reference>
<feature type="chain" id="PRO_0000298406" description="Disulfide bond formation protein B">
    <location>
        <begin position="1"/>
        <end position="169"/>
    </location>
</feature>
<feature type="topological domain" description="Cytoplasmic" evidence="1">
    <location>
        <begin position="1"/>
        <end position="13"/>
    </location>
</feature>
<feature type="transmembrane region" description="Helical" evidence="1">
    <location>
        <begin position="14"/>
        <end position="30"/>
    </location>
</feature>
<feature type="topological domain" description="Periplasmic" evidence="1">
    <location>
        <begin position="31"/>
        <end position="48"/>
    </location>
</feature>
<feature type="transmembrane region" description="Helical" evidence="1">
    <location>
        <begin position="49"/>
        <end position="64"/>
    </location>
</feature>
<feature type="topological domain" description="Cytoplasmic" evidence="1">
    <location>
        <begin position="65"/>
        <end position="71"/>
    </location>
</feature>
<feature type="transmembrane region" description="Helical" evidence="1">
    <location>
        <begin position="72"/>
        <end position="89"/>
    </location>
</feature>
<feature type="topological domain" description="Periplasmic" evidence="1">
    <location>
        <begin position="90"/>
        <end position="144"/>
    </location>
</feature>
<feature type="transmembrane region" description="Helical" evidence="1">
    <location>
        <begin position="145"/>
        <end position="163"/>
    </location>
</feature>
<feature type="topological domain" description="Cytoplasmic" evidence="1">
    <location>
        <begin position="164"/>
        <end position="169"/>
    </location>
</feature>
<feature type="disulfide bond" description="Redox-active" evidence="1">
    <location>
        <begin position="40"/>
        <end position="43"/>
    </location>
</feature>
<feature type="disulfide bond" description="Redox-active" evidence="1">
    <location>
        <begin position="104"/>
        <end position="130"/>
    </location>
</feature>
<proteinExistence type="inferred from homology"/>
<accession>A1S6X5</accession>
<comment type="function">
    <text evidence="1">Required for disulfide bond formation in some periplasmic proteins. Acts by oxidizing the DsbA protein.</text>
</comment>
<comment type="subcellular location">
    <subcellularLocation>
        <location evidence="1">Cell inner membrane</location>
        <topology evidence="1">Multi-pass membrane protein</topology>
    </subcellularLocation>
</comment>
<comment type="similarity">
    <text evidence="1">Belongs to the DsbB family.</text>
</comment>
<dbReference type="EMBL" id="CP000507">
    <property type="protein sequence ID" value="ABM00132.1"/>
    <property type="molecule type" value="Genomic_DNA"/>
</dbReference>
<dbReference type="RefSeq" id="WP_011760039.1">
    <property type="nucleotide sequence ID" value="NC_008700.1"/>
</dbReference>
<dbReference type="SMR" id="A1S6X5"/>
<dbReference type="STRING" id="326297.Sama_1926"/>
<dbReference type="KEGG" id="saz:Sama_1926"/>
<dbReference type="eggNOG" id="COG1495">
    <property type="taxonomic scope" value="Bacteria"/>
</dbReference>
<dbReference type="HOGENOM" id="CLU_098660_2_0_6"/>
<dbReference type="OrthoDB" id="3711263at2"/>
<dbReference type="Proteomes" id="UP000009175">
    <property type="component" value="Chromosome"/>
</dbReference>
<dbReference type="GO" id="GO:0005886">
    <property type="term" value="C:plasma membrane"/>
    <property type="evidence" value="ECO:0007669"/>
    <property type="project" value="UniProtKB-SubCell"/>
</dbReference>
<dbReference type="GO" id="GO:0009055">
    <property type="term" value="F:electron transfer activity"/>
    <property type="evidence" value="ECO:0007669"/>
    <property type="project" value="UniProtKB-UniRule"/>
</dbReference>
<dbReference type="GO" id="GO:0015035">
    <property type="term" value="F:protein-disulfide reductase activity"/>
    <property type="evidence" value="ECO:0007669"/>
    <property type="project" value="UniProtKB-UniRule"/>
</dbReference>
<dbReference type="GO" id="GO:0006457">
    <property type="term" value="P:protein folding"/>
    <property type="evidence" value="ECO:0007669"/>
    <property type="project" value="InterPro"/>
</dbReference>
<dbReference type="Gene3D" id="1.20.1550.10">
    <property type="entry name" value="DsbB-like"/>
    <property type="match status" value="1"/>
</dbReference>
<dbReference type="HAMAP" id="MF_00286">
    <property type="entry name" value="DsbB"/>
    <property type="match status" value="1"/>
</dbReference>
<dbReference type="InterPro" id="IPR003752">
    <property type="entry name" value="DiS_bond_form_DsbB/BdbC"/>
</dbReference>
<dbReference type="InterPro" id="IPR022920">
    <property type="entry name" value="Disulphide_bond_form_DsbB"/>
</dbReference>
<dbReference type="InterPro" id="IPR050183">
    <property type="entry name" value="DsbB"/>
</dbReference>
<dbReference type="InterPro" id="IPR023380">
    <property type="entry name" value="DsbB-like_sf"/>
</dbReference>
<dbReference type="NCBIfam" id="NF002485">
    <property type="entry name" value="PRK01749.1"/>
    <property type="match status" value="1"/>
</dbReference>
<dbReference type="PANTHER" id="PTHR36570">
    <property type="entry name" value="DISULFIDE BOND FORMATION PROTEIN B"/>
    <property type="match status" value="1"/>
</dbReference>
<dbReference type="PANTHER" id="PTHR36570:SF2">
    <property type="entry name" value="DISULFIDE BOND FORMATION PROTEIN B"/>
    <property type="match status" value="1"/>
</dbReference>
<dbReference type="Pfam" id="PF02600">
    <property type="entry name" value="DsbB"/>
    <property type="match status" value="1"/>
</dbReference>
<dbReference type="SUPFAM" id="SSF158442">
    <property type="entry name" value="DsbB-like"/>
    <property type="match status" value="1"/>
</dbReference>